<evidence type="ECO:0000250" key="1"/>
<evidence type="ECO:0000255" key="2">
    <source>
        <dbReference type="HAMAP-Rule" id="MF_01289"/>
    </source>
</evidence>
<accession>B5QUN9</accession>
<sequence length="382" mass="42379">MKITHITTYRLPPRWMFLKIETDEGVVGWGEPVIEGRARTVEAAVHEFADYLIGKDPARINDLWQVMYRAGFYRGGPIMMSAIAGIDQALWDIKGKVLNAPVWQLMGGLVRDKIKAYSWVGGDRPADVIDGIEKLRGIGFDTFKLNGCEEMGVIDNSRAVDAAVNTVAQIREAFGSEIEFGLDFHGRVSAPMAKVLIKELEPYRPLFIEEPVLAEQAEYYPRLAAQTHIPIAAGERMFSRFEFKRVLDAGGLAILQPDLSHAGGITECYKIAGMAEAYDVALAPHCPLGPIALAACLHIDFVSRNAVFQEQSMGIHYNKGAELLDFVKNKEDFSMDGGFFKPLTKPGLGVDIDEARVIELSKSAPDWRNPLWRHADGSVAEW</sequence>
<reference key="1">
    <citation type="journal article" date="2008" name="Genome Res.">
        <title>Comparative genome analysis of Salmonella enteritidis PT4 and Salmonella gallinarum 287/91 provides insights into evolutionary and host adaptation pathways.</title>
        <authorList>
            <person name="Thomson N.R."/>
            <person name="Clayton D.J."/>
            <person name="Windhorst D."/>
            <person name="Vernikos G."/>
            <person name="Davidson S."/>
            <person name="Churcher C."/>
            <person name="Quail M.A."/>
            <person name="Stevens M."/>
            <person name="Jones M.A."/>
            <person name="Watson M."/>
            <person name="Barron A."/>
            <person name="Layton A."/>
            <person name="Pickard D."/>
            <person name="Kingsley R.A."/>
            <person name="Bignell A."/>
            <person name="Clark L."/>
            <person name="Harris B."/>
            <person name="Ormond D."/>
            <person name="Abdellah Z."/>
            <person name="Brooks K."/>
            <person name="Cherevach I."/>
            <person name="Chillingworth T."/>
            <person name="Woodward J."/>
            <person name="Norberczak H."/>
            <person name="Lord A."/>
            <person name="Arrowsmith C."/>
            <person name="Jagels K."/>
            <person name="Moule S."/>
            <person name="Mungall K."/>
            <person name="Saunders M."/>
            <person name="Whitehead S."/>
            <person name="Chabalgoity J.A."/>
            <person name="Maskell D."/>
            <person name="Humphreys T."/>
            <person name="Roberts M."/>
            <person name="Barrow P.A."/>
            <person name="Dougan G."/>
            <person name="Parkhill J."/>
        </authorList>
    </citation>
    <scope>NUCLEOTIDE SEQUENCE [LARGE SCALE GENOMIC DNA]</scope>
    <source>
        <strain>P125109</strain>
    </source>
</reference>
<gene>
    <name evidence="2" type="primary">dgoD</name>
    <name type="ordered locus">SEN3644</name>
</gene>
<feature type="chain" id="PRO_1000140387" description="D-galactonate dehydratase">
    <location>
        <begin position="1"/>
        <end position="382"/>
    </location>
</feature>
<feature type="active site" description="Proton donor" evidence="1">
    <location>
        <position position="185"/>
    </location>
</feature>
<feature type="active site" description="Proton acceptor" evidence="1">
    <location>
        <position position="285"/>
    </location>
</feature>
<feature type="binding site" evidence="2">
    <location>
        <position position="183"/>
    </location>
    <ligand>
        <name>Mg(2+)</name>
        <dbReference type="ChEBI" id="CHEBI:18420"/>
    </ligand>
</feature>
<feature type="binding site" evidence="2">
    <location>
        <position position="209"/>
    </location>
    <ligand>
        <name>Mg(2+)</name>
        <dbReference type="ChEBI" id="CHEBI:18420"/>
    </ligand>
</feature>
<feature type="binding site" evidence="2">
    <location>
        <position position="235"/>
    </location>
    <ligand>
        <name>Mg(2+)</name>
        <dbReference type="ChEBI" id="CHEBI:18420"/>
    </ligand>
</feature>
<feature type="site" description="Increases basicity of active site His" evidence="2">
    <location>
        <position position="258"/>
    </location>
</feature>
<feature type="site" description="Transition state stabilizer" evidence="2">
    <location>
        <position position="310"/>
    </location>
</feature>
<protein>
    <recommendedName>
        <fullName evidence="2">D-galactonate dehydratase</fullName>
        <shortName evidence="2">GalD</shortName>
        <ecNumber evidence="2">4.2.1.6</ecNumber>
    </recommendedName>
</protein>
<name>DGOD_SALEP</name>
<organism>
    <name type="scientific">Salmonella enteritidis PT4 (strain P125109)</name>
    <dbReference type="NCBI Taxonomy" id="550537"/>
    <lineage>
        <taxon>Bacteria</taxon>
        <taxon>Pseudomonadati</taxon>
        <taxon>Pseudomonadota</taxon>
        <taxon>Gammaproteobacteria</taxon>
        <taxon>Enterobacterales</taxon>
        <taxon>Enterobacteriaceae</taxon>
        <taxon>Salmonella</taxon>
    </lineage>
</organism>
<dbReference type="EC" id="4.2.1.6" evidence="2"/>
<dbReference type="EMBL" id="AM933172">
    <property type="protein sequence ID" value="CAR35220.1"/>
    <property type="molecule type" value="Genomic_DNA"/>
</dbReference>
<dbReference type="RefSeq" id="WP_000704735.1">
    <property type="nucleotide sequence ID" value="NC_011294.1"/>
</dbReference>
<dbReference type="SMR" id="B5QUN9"/>
<dbReference type="KEGG" id="set:SEN3644"/>
<dbReference type="HOGENOM" id="CLU_030273_3_2_6"/>
<dbReference type="UniPathway" id="UPA00081">
    <property type="reaction ID" value="UER00518"/>
</dbReference>
<dbReference type="Proteomes" id="UP000000613">
    <property type="component" value="Chromosome"/>
</dbReference>
<dbReference type="GO" id="GO:0008869">
    <property type="term" value="F:galactonate dehydratase activity"/>
    <property type="evidence" value="ECO:0007669"/>
    <property type="project" value="UniProtKB-UniRule"/>
</dbReference>
<dbReference type="GO" id="GO:0000287">
    <property type="term" value="F:magnesium ion binding"/>
    <property type="evidence" value="ECO:0007669"/>
    <property type="project" value="UniProtKB-UniRule"/>
</dbReference>
<dbReference type="GO" id="GO:0009063">
    <property type="term" value="P:amino acid catabolic process"/>
    <property type="evidence" value="ECO:0007669"/>
    <property type="project" value="InterPro"/>
</dbReference>
<dbReference type="GO" id="GO:0034194">
    <property type="term" value="P:D-galactonate catabolic process"/>
    <property type="evidence" value="ECO:0007669"/>
    <property type="project" value="UniProtKB-UniRule"/>
</dbReference>
<dbReference type="CDD" id="cd03325">
    <property type="entry name" value="D-galactonate_dehydratase"/>
    <property type="match status" value="1"/>
</dbReference>
<dbReference type="FunFam" id="3.20.20.120:FF:000008">
    <property type="entry name" value="D-galactonate dehydratase"/>
    <property type="match status" value="1"/>
</dbReference>
<dbReference type="FunFam" id="3.30.390.10:FF:000003">
    <property type="entry name" value="D-galactonate dehydratase"/>
    <property type="match status" value="1"/>
</dbReference>
<dbReference type="Gene3D" id="3.20.20.120">
    <property type="entry name" value="Enolase-like C-terminal domain"/>
    <property type="match status" value="1"/>
</dbReference>
<dbReference type="Gene3D" id="3.30.390.10">
    <property type="entry name" value="Enolase-like, N-terminal domain"/>
    <property type="match status" value="1"/>
</dbReference>
<dbReference type="HAMAP" id="MF_01289">
    <property type="entry name" value="Galacton_dehydrat"/>
    <property type="match status" value="1"/>
</dbReference>
<dbReference type="InterPro" id="IPR034593">
    <property type="entry name" value="DgoD-like"/>
</dbReference>
<dbReference type="InterPro" id="IPR036849">
    <property type="entry name" value="Enolase-like_C_sf"/>
</dbReference>
<dbReference type="InterPro" id="IPR029017">
    <property type="entry name" value="Enolase-like_N"/>
</dbReference>
<dbReference type="InterPro" id="IPR029065">
    <property type="entry name" value="Enolase_C-like"/>
</dbReference>
<dbReference type="InterPro" id="IPR023592">
    <property type="entry name" value="Galactonate_deHydtase"/>
</dbReference>
<dbReference type="InterPro" id="IPR018110">
    <property type="entry name" value="Mandel_Rmase/mucon_lact_enz_CS"/>
</dbReference>
<dbReference type="InterPro" id="IPR013342">
    <property type="entry name" value="Mandelate_racemase_C"/>
</dbReference>
<dbReference type="InterPro" id="IPR013341">
    <property type="entry name" value="Mandelate_racemase_N_dom"/>
</dbReference>
<dbReference type="NCBIfam" id="NF010624">
    <property type="entry name" value="PRK14017.1"/>
    <property type="match status" value="1"/>
</dbReference>
<dbReference type="PANTHER" id="PTHR48080:SF2">
    <property type="entry name" value="D-GALACTONATE DEHYDRATASE"/>
    <property type="match status" value="1"/>
</dbReference>
<dbReference type="PANTHER" id="PTHR48080">
    <property type="entry name" value="D-GALACTONATE DEHYDRATASE-RELATED"/>
    <property type="match status" value="1"/>
</dbReference>
<dbReference type="Pfam" id="PF13378">
    <property type="entry name" value="MR_MLE_C"/>
    <property type="match status" value="1"/>
</dbReference>
<dbReference type="Pfam" id="PF02746">
    <property type="entry name" value="MR_MLE_N"/>
    <property type="match status" value="1"/>
</dbReference>
<dbReference type="SFLD" id="SFLDF00003">
    <property type="entry name" value="D-galactonate_dehydratase"/>
    <property type="match status" value="1"/>
</dbReference>
<dbReference type="SFLD" id="SFLDS00001">
    <property type="entry name" value="Enolase"/>
    <property type="match status" value="1"/>
</dbReference>
<dbReference type="SMART" id="SM00922">
    <property type="entry name" value="MR_MLE"/>
    <property type="match status" value="1"/>
</dbReference>
<dbReference type="SUPFAM" id="SSF51604">
    <property type="entry name" value="Enolase C-terminal domain-like"/>
    <property type="match status" value="1"/>
</dbReference>
<dbReference type="SUPFAM" id="SSF54826">
    <property type="entry name" value="Enolase N-terminal domain-like"/>
    <property type="match status" value="1"/>
</dbReference>
<dbReference type="PROSITE" id="PS00908">
    <property type="entry name" value="MR_MLE_1"/>
    <property type="match status" value="1"/>
</dbReference>
<dbReference type="PROSITE" id="PS00909">
    <property type="entry name" value="MR_MLE_2"/>
    <property type="match status" value="1"/>
</dbReference>
<keyword id="KW-0456">Lyase</keyword>
<keyword id="KW-0460">Magnesium</keyword>
<keyword id="KW-0479">Metal-binding</keyword>
<proteinExistence type="inferred from homology"/>
<comment type="function">
    <text evidence="2">Catalyzes the dehydration of D-galactonate to 2-keto-3-deoxy-D-galactonate.</text>
</comment>
<comment type="catalytic activity">
    <reaction evidence="2">
        <text>D-galactonate = 2-dehydro-3-deoxy-D-galactonate + H2O</text>
        <dbReference type="Rhea" id="RHEA:18649"/>
        <dbReference type="ChEBI" id="CHEBI:12931"/>
        <dbReference type="ChEBI" id="CHEBI:15377"/>
        <dbReference type="ChEBI" id="CHEBI:57989"/>
        <dbReference type="EC" id="4.2.1.6"/>
    </reaction>
</comment>
<comment type="cofactor">
    <cofactor evidence="2">
        <name>Mg(2+)</name>
        <dbReference type="ChEBI" id="CHEBI:18420"/>
    </cofactor>
    <text evidence="2">Binds 1 Mg(2+) ion per subunit.</text>
</comment>
<comment type="pathway">
    <text evidence="2">Carbohydrate acid metabolism; D-galactonate degradation; D-glyceraldehyde 3-phosphate and pyruvate from D-galactonate: step 1/3.</text>
</comment>
<comment type="miscellaneous">
    <text evidence="2">Reaction proceeds via an anti dehydration.</text>
</comment>
<comment type="similarity">
    <text evidence="2">Belongs to the mandelate racemase/muconate lactonizing enzyme family. GalD subfamily.</text>
</comment>